<proteinExistence type="inferred from homology"/>
<name>MUKF_VIBCM</name>
<feature type="chain" id="PRO_1000187522" description="Chromosome partition protein MukF">
    <location>
        <begin position="1"/>
        <end position="445"/>
    </location>
</feature>
<feature type="region of interest" description="Leucine-zipper">
    <location>
        <begin position="213"/>
        <end position="241"/>
    </location>
</feature>
<accession>C3LN39</accession>
<organism>
    <name type="scientific">Vibrio cholerae serotype O1 (strain M66-2)</name>
    <dbReference type="NCBI Taxonomy" id="579112"/>
    <lineage>
        <taxon>Bacteria</taxon>
        <taxon>Pseudomonadati</taxon>
        <taxon>Pseudomonadota</taxon>
        <taxon>Gammaproteobacteria</taxon>
        <taxon>Vibrionales</taxon>
        <taxon>Vibrionaceae</taxon>
        <taxon>Vibrio</taxon>
    </lineage>
</organism>
<sequence length="445" mass="51208">MSEFTQDTVQKPIDELVTWVKQYDFSLNLPTERLAFLLAIAVLSNERFDEELGEGELHDAFAIVTRLFAESGEASAFRANNAINDLVKQRLLSRFTSEMTEGASIYRLTPLAIGITDYYVRHREFSKLKLSIQLSMVADEMAKAVESAQQGGSVAHWRKNVFGVLKYSVSEIFDRIDLNQRVMDEQQQSVKEQIADLLNKDWRDAINNCEALLSETSATLRELQDTLQAAGDELQTQILDIQECVYGDLELDFIEETLSALQMKLDRITSWGQQSIDLWIGYDRHVHKFIRTAIDMDQNRAFSQRLRQSMNDYFEQPWYLTYADAERLSDLRDETLTLRDEEVTGHVPTEVEYEELQQVNDELAQRIGDMLKVHKEQGAAIDLALVLRDYLASHPRTHHFDLARMVVDQAVRLGYSESDYRAIQPDWTAINDFGAKVQANVIDRY</sequence>
<keyword id="KW-0106">Calcium</keyword>
<keyword id="KW-0131">Cell cycle</keyword>
<keyword id="KW-0132">Cell division</keyword>
<keyword id="KW-0159">Chromosome partition</keyword>
<keyword id="KW-0963">Cytoplasm</keyword>
<keyword id="KW-0226">DNA condensation</keyword>
<dbReference type="EMBL" id="CP001233">
    <property type="protein sequence ID" value="ACP05965.1"/>
    <property type="molecule type" value="Genomic_DNA"/>
</dbReference>
<dbReference type="RefSeq" id="WP_001288886.1">
    <property type="nucleotide sequence ID" value="NC_012578.1"/>
</dbReference>
<dbReference type="SMR" id="C3LN39"/>
<dbReference type="KEGG" id="vcm:VCM66_1656"/>
<dbReference type="HOGENOM" id="CLU_049853_0_0_6"/>
<dbReference type="Proteomes" id="UP000001217">
    <property type="component" value="Chromosome I"/>
</dbReference>
<dbReference type="GO" id="GO:0005737">
    <property type="term" value="C:cytoplasm"/>
    <property type="evidence" value="ECO:0007669"/>
    <property type="project" value="UniProtKB-UniRule"/>
</dbReference>
<dbReference type="GO" id="GO:0009295">
    <property type="term" value="C:nucleoid"/>
    <property type="evidence" value="ECO:0007669"/>
    <property type="project" value="UniProtKB-SubCell"/>
</dbReference>
<dbReference type="GO" id="GO:0005509">
    <property type="term" value="F:calcium ion binding"/>
    <property type="evidence" value="ECO:0007669"/>
    <property type="project" value="UniProtKB-UniRule"/>
</dbReference>
<dbReference type="GO" id="GO:0051301">
    <property type="term" value="P:cell division"/>
    <property type="evidence" value="ECO:0007669"/>
    <property type="project" value="UniProtKB-KW"/>
</dbReference>
<dbReference type="GO" id="GO:0030261">
    <property type="term" value="P:chromosome condensation"/>
    <property type="evidence" value="ECO:0007669"/>
    <property type="project" value="UniProtKB-KW"/>
</dbReference>
<dbReference type="GO" id="GO:0007059">
    <property type="term" value="P:chromosome segregation"/>
    <property type="evidence" value="ECO:0007669"/>
    <property type="project" value="UniProtKB-UniRule"/>
</dbReference>
<dbReference type="GO" id="GO:0006260">
    <property type="term" value="P:DNA replication"/>
    <property type="evidence" value="ECO:0007669"/>
    <property type="project" value="UniProtKB-UniRule"/>
</dbReference>
<dbReference type="CDD" id="cd16337">
    <property type="entry name" value="MukF_C"/>
    <property type="match status" value="1"/>
</dbReference>
<dbReference type="CDD" id="cd16335">
    <property type="entry name" value="MukF_N"/>
    <property type="match status" value="1"/>
</dbReference>
<dbReference type="Gene3D" id="1.20.58.590">
    <property type="entry name" value="Chromosome partition protein MukF, middle domain"/>
    <property type="match status" value="1"/>
</dbReference>
<dbReference type="Gene3D" id="1.10.225.40">
    <property type="entry name" value="MukF, C-terminal domain"/>
    <property type="match status" value="1"/>
</dbReference>
<dbReference type="Gene3D" id="1.10.10.10">
    <property type="entry name" value="Winged helix-like DNA-binding domain superfamily/Winged helix DNA-binding domain"/>
    <property type="match status" value="1"/>
</dbReference>
<dbReference type="HAMAP" id="MF_01803">
    <property type="entry name" value="MukF"/>
    <property type="match status" value="1"/>
</dbReference>
<dbReference type="InterPro" id="IPR005582">
    <property type="entry name" value="Chromosome_partition_MukF"/>
</dbReference>
<dbReference type="InterPro" id="IPR033441">
    <property type="entry name" value="MukF_C"/>
</dbReference>
<dbReference type="InterPro" id="IPR038198">
    <property type="entry name" value="MukF_C_sf"/>
</dbReference>
<dbReference type="InterPro" id="IPR033440">
    <property type="entry name" value="MukF_M"/>
</dbReference>
<dbReference type="InterPro" id="IPR036141">
    <property type="entry name" value="MukF_M_sp"/>
</dbReference>
<dbReference type="InterPro" id="IPR033439">
    <property type="entry name" value="MukF_WHTH"/>
</dbReference>
<dbReference type="InterPro" id="IPR036388">
    <property type="entry name" value="WH-like_DNA-bd_sf"/>
</dbReference>
<dbReference type="InterPro" id="IPR036390">
    <property type="entry name" value="WH_DNA-bd_sf"/>
</dbReference>
<dbReference type="NCBIfam" id="NF003615">
    <property type="entry name" value="PRK05260.1"/>
    <property type="match status" value="1"/>
</dbReference>
<dbReference type="Pfam" id="PF03882">
    <property type="entry name" value="KicB"/>
    <property type="match status" value="1"/>
</dbReference>
<dbReference type="Pfam" id="PF17193">
    <property type="entry name" value="MukF_C"/>
    <property type="match status" value="1"/>
</dbReference>
<dbReference type="Pfam" id="PF17192">
    <property type="entry name" value="MukF_M"/>
    <property type="match status" value="1"/>
</dbReference>
<dbReference type="PIRSF" id="PIRSF018282">
    <property type="entry name" value="MukF"/>
    <property type="match status" value="1"/>
</dbReference>
<dbReference type="SUPFAM" id="SSF140570">
    <property type="entry name" value="MukF C-terminal domain-like"/>
    <property type="match status" value="1"/>
</dbReference>
<dbReference type="SUPFAM" id="SSF46785">
    <property type="entry name" value="Winged helix' DNA-binding domain"/>
    <property type="match status" value="1"/>
</dbReference>
<gene>
    <name evidence="1" type="primary">mukF</name>
    <name type="ordered locus">VCM66_1656</name>
</gene>
<evidence type="ECO:0000255" key="1">
    <source>
        <dbReference type="HAMAP-Rule" id="MF_01803"/>
    </source>
</evidence>
<protein>
    <recommendedName>
        <fullName evidence="1">Chromosome partition protein MukF</fullName>
    </recommendedName>
</protein>
<reference key="1">
    <citation type="journal article" date="2008" name="PLoS ONE">
        <title>A recalibrated molecular clock and independent origins for the cholera pandemic clones.</title>
        <authorList>
            <person name="Feng L."/>
            <person name="Reeves P.R."/>
            <person name="Lan R."/>
            <person name="Ren Y."/>
            <person name="Gao C."/>
            <person name="Zhou Z."/>
            <person name="Ren Y."/>
            <person name="Cheng J."/>
            <person name="Wang W."/>
            <person name="Wang J."/>
            <person name="Qian W."/>
            <person name="Li D."/>
            <person name="Wang L."/>
        </authorList>
    </citation>
    <scope>NUCLEOTIDE SEQUENCE [LARGE SCALE GENOMIC DNA]</scope>
    <source>
        <strain>M66-2</strain>
    </source>
</reference>
<comment type="function">
    <text evidence="1">Involved in chromosome condensation, segregation and cell cycle progression. May participate in facilitating chromosome segregation by condensation DNA from both sides of a centrally located replisome during cell division. Not required for mini-F plasmid partitioning. Probably acts via its interaction with MukB and MukE. Overexpression results in anucleate cells. It has a calcium binding activity.</text>
</comment>
<comment type="subunit">
    <text evidence="1">Interacts, and probably forms a ternary complex, with MukE and MukB via its C-terminal region. The complex formation is stimulated by calcium or magnesium. It is required for an interaction between MukE and MukB.</text>
</comment>
<comment type="subcellular location">
    <subcellularLocation>
        <location evidence="1">Cytoplasm</location>
        <location evidence="1">Nucleoid</location>
    </subcellularLocation>
    <text evidence="1">Restricted to the nucleoid region.</text>
</comment>
<comment type="similarity">
    <text evidence="1">Belongs to the MukF family.</text>
</comment>